<reference key="1">
    <citation type="journal article" date="1995" name="J. Biol. Chem.">
        <title>Cloning and expression of the Chlamydia trachomatis gene for CTP synthetase.</title>
        <authorList>
            <person name="Tipples G."/>
            <person name="McClarty G."/>
        </authorList>
    </citation>
    <scope>NUCLEOTIDE SEQUENCE [GENOMIC DNA]</scope>
    <source>
        <strain>L2</strain>
    </source>
</reference>
<reference key="2">
    <citation type="journal article" date="1998" name="Science">
        <title>Genome sequence of an obligate intracellular pathogen of humans: Chlamydia trachomatis.</title>
        <authorList>
            <person name="Stephens R.S."/>
            <person name="Kalman S."/>
            <person name="Lammel C.J."/>
            <person name="Fan J."/>
            <person name="Marathe R."/>
            <person name="Aravind L."/>
            <person name="Mitchell W.P."/>
            <person name="Olinger L."/>
            <person name="Tatusov R.L."/>
            <person name="Zhao Q."/>
            <person name="Koonin E.V."/>
            <person name="Davis R.W."/>
        </authorList>
    </citation>
    <scope>NUCLEOTIDE SEQUENCE [LARGE SCALE GENOMIC DNA]</scope>
    <source>
        <strain>ATCC VR-885 / DSM 19411 / UW-3/Cx</strain>
    </source>
</reference>
<comment type="function">
    <text evidence="1">Could be a nuclease involved in processing of the 5'-end of pre-16S rRNA.</text>
</comment>
<comment type="subcellular location">
    <subcellularLocation>
        <location evidence="1">Cytoplasm</location>
    </subcellularLocation>
</comment>
<comment type="similarity">
    <text evidence="1">Belongs to the YqgF nuclease family.</text>
</comment>
<sequence length="148" mass="16222">MNIAKQQQAFLGIDYGKKRIGLAFASSPLLIPLPIGNVEARSSLTLTAQALVSIIKERAVTTVVFGNPLPMQKAYASSVQSEIQELAALIQEMTAIEVILWDERLSSAQAERMLKSDCGLNRKQRKNPSDSLAATLILSSFLDSRKLY</sequence>
<accession>Q46370</accession>
<accession>O84187</accession>
<evidence type="ECO:0000255" key="1">
    <source>
        <dbReference type="HAMAP-Rule" id="MF_00651"/>
    </source>
</evidence>
<evidence type="ECO:0000305" key="2"/>
<organism>
    <name type="scientific">Chlamydia trachomatis serovar D (strain ATCC VR-885 / DSM 19411 / UW-3/Cx)</name>
    <dbReference type="NCBI Taxonomy" id="272561"/>
    <lineage>
        <taxon>Bacteria</taxon>
        <taxon>Pseudomonadati</taxon>
        <taxon>Chlamydiota</taxon>
        <taxon>Chlamydiia</taxon>
        <taxon>Chlamydiales</taxon>
        <taxon>Chlamydiaceae</taxon>
        <taxon>Chlamydia/Chlamydophila group</taxon>
        <taxon>Chlamydia</taxon>
    </lineage>
</organism>
<keyword id="KW-0963">Cytoplasm</keyword>
<keyword id="KW-0378">Hydrolase</keyword>
<keyword id="KW-0540">Nuclease</keyword>
<keyword id="KW-1185">Reference proteome</keyword>
<keyword id="KW-0690">Ribosome biogenesis</keyword>
<name>YQGF_CHLTR</name>
<proteinExistence type="inferred from homology"/>
<dbReference type="EC" id="3.1.-.-" evidence="1"/>
<dbReference type="EMBL" id="U15192">
    <property type="protein sequence ID" value="AAA80196.1"/>
    <property type="molecule type" value="Genomic_DNA"/>
</dbReference>
<dbReference type="EMBL" id="AE001273">
    <property type="protein sequence ID" value="AAC67776.1"/>
    <property type="molecule type" value="Genomic_DNA"/>
</dbReference>
<dbReference type="PIR" id="A71546">
    <property type="entry name" value="A71546"/>
</dbReference>
<dbReference type="PIR" id="C56447">
    <property type="entry name" value="C56447"/>
</dbReference>
<dbReference type="RefSeq" id="NP_219688.1">
    <property type="nucleotide sequence ID" value="NC_000117.1"/>
</dbReference>
<dbReference type="SMR" id="Q46370"/>
<dbReference type="FunCoup" id="Q46370">
    <property type="interactions" value="161"/>
</dbReference>
<dbReference type="STRING" id="272561.CT_184"/>
<dbReference type="EnsemblBacteria" id="AAC67776">
    <property type="protein sequence ID" value="AAC67776"/>
    <property type="gene ID" value="CT_184"/>
</dbReference>
<dbReference type="GeneID" id="884945"/>
<dbReference type="KEGG" id="ctr:CT_184"/>
<dbReference type="PATRIC" id="fig|272561.5.peg.198"/>
<dbReference type="HOGENOM" id="CLU_098240_2_0_0"/>
<dbReference type="InParanoid" id="Q46370"/>
<dbReference type="OrthoDB" id="9796140at2"/>
<dbReference type="Proteomes" id="UP000000431">
    <property type="component" value="Chromosome"/>
</dbReference>
<dbReference type="GO" id="GO:0005737">
    <property type="term" value="C:cytoplasm"/>
    <property type="evidence" value="ECO:0007669"/>
    <property type="project" value="UniProtKB-SubCell"/>
</dbReference>
<dbReference type="GO" id="GO:0004518">
    <property type="term" value="F:nuclease activity"/>
    <property type="evidence" value="ECO:0007669"/>
    <property type="project" value="UniProtKB-KW"/>
</dbReference>
<dbReference type="GO" id="GO:0000967">
    <property type="term" value="P:rRNA 5'-end processing"/>
    <property type="evidence" value="ECO:0000318"/>
    <property type="project" value="GO_Central"/>
</dbReference>
<dbReference type="CDD" id="cd16964">
    <property type="entry name" value="YqgF"/>
    <property type="match status" value="1"/>
</dbReference>
<dbReference type="FunFam" id="3.30.420.140:FF:000020">
    <property type="entry name" value="Putative pre-16S rRNA nuclease"/>
    <property type="match status" value="1"/>
</dbReference>
<dbReference type="Gene3D" id="3.30.420.140">
    <property type="entry name" value="YqgF/RNase H-like domain"/>
    <property type="match status" value="1"/>
</dbReference>
<dbReference type="HAMAP" id="MF_00651">
    <property type="entry name" value="Nuclease_YqgF"/>
    <property type="match status" value="1"/>
</dbReference>
<dbReference type="InterPro" id="IPR012337">
    <property type="entry name" value="RNaseH-like_sf"/>
</dbReference>
<dbReference type="InterPro" id="IPR005227">
    <property type="entry name" value="YqgF"/>
</dbReference>
<dbReference type="InterPro" id="IPR006641">
    <property type="entry name" value="YqgF/RNaseH-like_dom"/>
</dbReference>
<dbReference type="InterPro" id="IPR037027">
    <property type="entry name" value="YqgF/RNaseH-like_dom_sf"/>
</dbReference>
<dbReference type="NCBIfam" id="TIGR00250">
    <property type="entry name" value="RNAse_H_YqgF"/>
    <property type="match status" value="1"/>
</dbReference>
<dbReference type="PANTHER" id="PTHR33317">
    <property type="entry name" value="POLYNUCLEOTIDYL TRANSFERASE, RIBONUCLEASE H-LIKE SUPERFAMILY PROTEIN"/>
    <property type="match status" value="1"/>
</dbReference>
<dbReference type="PANTHER" id="PTHR33317:SF4">
    <property type="entry name" value="POLYNUCLEOTIDYL TRANSFERASE, RIBONUCLEASE H-LIKE SUPERFAMILY PROTEIN"/>
    <property type="match status" value="1"/>
</dbReference>
<dbReference type="Pfam" id="PF03652">
    <property type="entry name" value="RuvX"/>
    <property type="match status" value="1"/>
</dbReference>
<dbReference type="SMART" id="SM00732">
    <property type="entry name" value="YqgFc"/>
    <property type="match status" value="1"/>
</dbReference>
<dbReference type="SUPFAM" id="SSF53098">
    <property type="entry name" value="Ribonuclease H-like"/>
    <property type="match status" value="1"/>
</dbReference>
<protein>
    <recommendedName>
        <fullName evidence="1">Putative pre-16S rRNA nuclease</fullName>
        <ecNumber evidence="1">3.1.-.-</ecNumber>
    </recommendedName>
</protein>
<gene>
    <name type="ordered locus">CT_184</name>
</gene>
<feature type="chain" id="PRO_0000172047" description="Putative pre-16S rRNA nuclease">
    <location>
        <begin position="1"/>
        <end position="148"/>
    </location>
</feature>
<feature type="sequence conflict" description="In Ref. 1; AAA80196." evidence="2" ref="1">
    <original>P</original>
    <variation>S</variation>
    <location>
        <position position="128"/>
    </location>
</feature>